<evidence type="ECO:0000255" key="1"/>
<evidence type="ECO:0000269" key="2">
    <source>
    </source>
</evidence>
<evidence type="ECO:0000269" key="3">
    <source>
    </source>
</evidence>
<evidence type="ECO:0000305" key="4"/>
<sequence>MRLISKRRIRFIVFILFGVLTVFVVSRLVVHFQYNQEIKFYKKYFQQRKDGLHEIYNPLEIKQIPKETIDDLYTARLDKELKNGEVIEWSKFAYVNYVTNADYLCNTLIIFNDLKQEFETKAKLVLLISKDLLDPNTSSNVAYISSLLNKIQAIDEDQVVIKLIDNIVKPKDTTPWNESLTKLLVFNQTEFDRVIYLDNDAILRSSLDELFFLPNYIKFAAPLTYWFLSNSDLEKSYHETRHREKQPINLQSYTKVLTKRIGKGQMIYNHLPSLPHSLYLNSNNIAQDIISSTSSLSPLFDFQSSKKVGKLKFASNLMVINPSKEAFDEIVNVMLPKILNKKEKYDMDLINEEMYNLKKIIYKQFIFFRKVRKLFKPEVLVLPFARYGLLTGSLRNPRHYSIIYNDVLGYKTLDNDGNDIPVGLNDSVAYSKYIHFSDYPLAKPWNYPSMKEFECIVKEEDAEDSKLEHQACDLWNSVYASYIQSREICLV</sequence>
<reference key="1">
    <citation type="journal article" date="1996" name="Yeast">
        <title>Sequencing of a 35.71 kb DNA segment on the right arm of yeast chromosome XV reveals regions of similarity to chromosomes I and XIII.</title>
        <authorList>
            <person name="Pearson B.M."/>
            <person name="Hernando Y."/>
            <person name="Payne J."/>
            <person name="Wolf S.S."/>
            <person name="Kalogeropoulos A."/>
            <person name="Schweizer M."/>
        </authorList>
    </citation>
    <scope>NUCLEOTIDE SEQUENCE [GENOMIC DNA]</scope>
    <source>
        <strain>ATCC 96604 / S288c / FY1679</strain>
    </source>
</reference>
<reference key="2">
    <citation type="journal article" date="1997" name="Nature">
        <title>The nucleotide sequence of Saccharomyces cerevisiae chromosome XV.</title>
        <authorList>
            <person name="Dujon B."/>
            <person name="Albermann K."/>
            <person name="Aldea M."/>
            <person name="Alexandraki D."/>
            <person name="Ansorge W."/>
            <person name="Arino J."/>
            <person name="Benes V."/>
            <person name="Bohn C."/>
            <person name="Bolotin-Fukuhara M."/>
            <person name="Bordonne R."/>
            <person name="Boyer J."/>
            <person name="Camasses A."/>
            <person name="Casamayor A."/>
            <person name="Casas C."/>
            <person name="Cheret G."/>
            <person name="Cziepluch C."/>
            <person name="Daignan-Fornier B."/>
            <person name="Dang V.-D."/>
            <person name="de Haan M."/>
            <person name="Delius H."/>
            <person name="Durand P."/>
            <person name="Fairhead C."/>
            <person name="Feldmann H."/>
            <person name="Gaillon L."/>
            <person name="Galisson F."/>
            <person name="Gamo F.-J."/>
            <person name="Gancedo C."/>
            <person name="Goffeau A."/>
            <person name="Goulding S.E."/>
            <person name="Grivell L.A."/>
            <person name="Habbig B."/>
            <person name="Hand N.J."/>
            <person name="Hani J."/>
            <person name="Hattenhorst U."/>
            <person name="Hebling U."/>
            <person name="Hernando Y."/>
            <person name="Herrero E."/>
            <person name="Heumann K."/>
            <person name="Hiesel R."/>
            <person name="Hilger F."/>
            <person name="Hofmann B."/>
            <person name="Hollenberg C.P."/>
            <person name="Hughes B."/>
            <person name="Jauniaux J.-C."/>
            <person name="Kalogeropoulos A."/>
            <person name="Katsoulou C."/>
            <person name="Kordes E."/>
            <person name="Lafuente M.J."/>
            <person name="Landt O."/>
            <person name="Louis E.J."/>
            <person name="Maarse A.C."/>
            <person name="Madania A."/>
            <person name="Mannhaupt G."/>
            <person name="Marck C."/>
            <person name="Martin R.P."/>
            <person name="Mewes H.-W."/>
            <person name="Michaux G."/>
            <person name="Paces V."/>
            <person name="Parle-McDermott A.G."/>
            <person name="Pearson B.M."/>
            <person name="Perrin A."/>
            <person name="Pettersson B."/>
            <person name="Poch O."/>
            <person name="Pohl T.M."/>
            <person name="Poirey R."/>
            <person name="Portetelle D."/>
            <person name="Pujol A."/>
            <person name="Purnelle B."/>
            <person name="Ramezani Rad M."/>
            <person name="Rechmann S."/>
            <person name="Schwager C."/>
            <person name="Schweizer M."/>
            <person name="Sor F."/>
            <person name="Sterky F."/>
            <person name="Tarassov I.A."/>
            <person name="Teodoru C."/>
            <person name="Tettelin H."/>
            <person name="Thierry A."/>
            <person name="Tobiasch E."/>
            <person name="Tzermia M."/>
            <person name="Uhlen M."/>
            <person name="Unseld M."/>
            <person name="Valens M."/>
            <person name="Vandenbol M."/>
            <person name="Vetter I."/>
            <person name="Vlcek C."/>
            <person name="Voet M."/>
            <person name="Volckaert G."/>
            <person name="Voss H."/>
            <person name="Wambutt R."/>
            <person name="Wedler H."/>
            <person name="Wiemann S."/>
            <person name="Winsor B."/>
            <person name="Wolfe K.H."/>
            <person name="Zollner A."/>
            <person name="Zumstein E."/>
            <person name="Kleine K."/>
        </authorList>
    </citation>
    <scope>NUCLEOTIDE SEQUENCE [LARGE SCALE GENOMIC DNA]</scope>
    <source>
        <strain>ATCC 204508 / S288c</strain>
    </source>
</reference>
<reference key="3">
    <citation type="journal article" date="2014" name="G3 (Bethesda)">
        <title>The reference genome sequence of Saccharomyces cerevisiae: Then and now.</title>
        <authorList>
            <person name="Engel S.R."/>
            <person name="Dietrich F.S."/>
            <person name="Fisk D.G."/>
            <person name="Binkley G."/>
            <person name="Balakrishnan R."/>
            <person name="Costanzo M.C."/>
            <person name="Dwight S.S."/>
            <person name="Hitz B.C."/>
            <person name="Karra K."/>
            <person name="Nash R.S."/>
            <person name="Weng S."/>
            <person name="Wong E.D."/>
            <person name="Lloyd P."/>
            <person name="Skrzypek M.S."/>
            <person name="Miyasato S.R."/>
            <person name="Simison M."/>
            <person name="Cherry J.M."/>
        </authorList>
    </citation>
    <scope>GENOME REANNOTATION</scope>
    <source>
        <strain>ATCC 204508 / S288c</strain>
    </source>
</reference>
<reference key="4">
    <citation type="journal article" date="2003" name="Glycobiology">
        <title>An N-acetylglucosaminyltransferase of the Golgi apparatus of the yeast Saccharomyces cerevisiae that can modify N-linked glycans.</title>
        <authorList>
            <person name="Yoko-o T."/>
            <person name="Wiggins C.A.R."/>
            <person name="Stolz J."/>
            <person name="Peak-Chew S.Y."/>
            <person name="Munro S."/>
        </authorList>
    </citation>
    <scope>FUNCTION</scope>
    <scope>GLYCOSYLATION</scope>
    <scope>SUBCELLULAR LOCATION</scope>
</reference>
<reference key="5">
    <citation type="journal article" date="2003" name="Nature">
        <title>Global analysis of protein localization in budding yeast.</title>
        <authorList>
            <person name="Huh W.-K."/>
            <person name="Falvo J.V."/>
            <person name="Gerke L.C."/>
            <person name="Carroll A.S."/>
            <person name="Howson R.W."/>
            <person name="Weissman J.S."/>
            <person name="O'Shea E.K."/>
        </authorList>
    </citation>
    <scope>SUBCELLULAR LOCATION [LARGE SCALE ANALYSIS]</scope>
</reference>
<reference key="6">
    <citation type="journal article" date="2003" name="Nature">
        <title>Global analysis of protein expression in yeast.</title>
        <authorList>
            <person name="Ghaemmaghami S."/>
            <person name="Huh W.-K."/>
            <person name="Bower K."/>
            <person name="Howson R.W."/>
            <person name="Belle A."/>
            <person name="Dephoure N."/>
            <person name="O'Shea E.K."/>
            <person name="Weissman J.S."/>
        </authorList>
    </citation>
    <scope>LEVEL OF PROTEIN EXPRESSION [LARGE SCALE ANALYSIS]</scope>
</reference>
<reference key="7">
    <citation type="journal article" date="2005" name="Mol. Cell. Biol.">
        <title>Immunoisolation of the yeast Golgi subcompartments and characterization of a novel membrane protein, Svp26, discovered in the Sed5-containing compartments.</title>
        <authorList>
            <person name="Inadome H."/>
            <person name="Noda Y."/>
            <person name="Adachi H."/>
            <person name="Yoda K."/>
        </authorList>
    </citation>
    <scope>SUBCELLULAR LOCATION</scope>
    <scope>IDENTIFICATION BY MASS SPECTROMETRY</scope>
</reference>
<keyword id="KW-0325">Glycoprotein</keyword>
<keyword id="KW-0333">Golgi apparatus</keyword>
<keyword id="KW-0472">Membrane</keyword>
<keyword id="KW-1185">Reference proteome</keyword>
<keyword id="KW-0735">Signal-anchor</keyword>
<keyword id="KW-0808">Transferase</keyword>
<keyword id="KW-0812">Transmembrane</keyword>
<keyword id="KW-1133">Transmembrane helix</keyword>
<keyword id="KW-0926">Vacuole</keyword>
<comment type="function">
    <text evidence="2">N-acetylglucosaminyltransferase involved in the Golgi-specific modification of N-linked glycans.</text>
</comment>
<comment type="subcellular location">
    <subcellularLocation>
        <location evidence="4">Golgi apparatus membrane</location>
        <topology evidence="4">Single-pass type II membrane protein</topology>
    </subcellularLocation>
    <subcellularLocation>
        <location evidence="4">Vacuole membrane</location>
        <topology evidence="4">Single-pass type II membrane protein</topology>
    </subcellularLocation>
</comment>
<comment type="PTM">
    <text evidence="2">N-glycosylated.</text>
</comment>
<comment type="miscellaneous">
    <text evidence="3">Present with 238 molecules/cell in log phase SD medium.</text>
</comment>
<comment type="similarity">
    <text evidence="4">Belongs to the GNT1 family.</text>
</comment>
<feature type="chain" id="PRO_0000087536" description="Glucose N-acetyltransferase 1">
    <location>
        <begin position="1"/>
        <end position="491"/>
    </location>
</feature>
<feature type="topological domain" description="Cytoplasmic" evidence="1">
    <location>
        <begin position="1"/>
        <end position="10"/>
    </location>
</feature>
<feature type="transmembrane region" description="Helical; Signal-anchor for type II membrane protein" evidence="1">
    <location>
        <begin position="11"/>
        <end position="31"/>
    </location>
</feature>
<feature type="topological domain" description="Lumenal" evidence="1">
    <location>
        <begin position="32"/>
        <end position="491"/>
    </location>
</feature>
<feature type="short sequence motif" description="DXD">
    <location>
        <begin position="198"/>
        <end position="200"/>
    </location>
</feature>
<feature type="glycosylation site" description="N-linked (GlcNAc...) asparagine" evidence="1">
    <location>
        <position position="136"/>
    </location>
</feature>
<feature type="glycosylation site" description="N-linked (GlcNAc...) asparagine" evidence="1">
    <location>
        <position position="177"/>
    </location>
</feature>
<feature type="glycosylation site" description="N-linked (GlcNAc...) asparagine" evidence="1">
    <location>
        <position position="187"/>
    </location>
</feature>
<feature type="glycosylation site" description="N-linked (GlcNAc...) asparagine" evidence="1">
    <location>
        <position position="425"/>
    </location>
</feature>
<dbReference type="EC" id="2.4.1.-"/>
<dbReference type="EMBL" id="X90565">
    <property type="protein sequence ID" value="CAA62175.1"/>
    <property type="molecule type" value="Genomic_DNA"/>
</dbReference>
<dbReference type="EMBL" id="Z75228">
    <property type="protein sequence ID" value="CAA99640.1"/>
    <property type="molecule type" value="Genomic_DNA"/>
</dbReference>
<dbReference type="EMBL" id="BK006948">
    <property type="protein sequence ID" value="DAA11084.1"/>
    <property type="molecule type" value="Genomic_DNA"/>
</dbReference>
<dbReference type="PIR" id="S58330">
    <property type="entry name" value="S58330"/>
</dbReference>
<dbReference type="RefSeq" id="NP_014965.3">
    <property type="nucleotide sequence ID" value="NM_001183740.3"/>
</dbReference>
<dbReference type="BioGRID" id="34706">
    <property type="interactions" value="80"/>
</dbReference>
<dbReference type="DIP" id="DIP-2557N"/>
<dbReference type="FunCoup" id="Q12096">
    <property type="interactions" value="37"/>
</dbReference>
<dbReference type="IntAct" id="Q12096">
    <property type="interactions" value="15"/>
</dbReference>
<dbReference type="STRING" id="4932.YOR320C"/>
<dbReference type="CAZy" id="GT8">
    <property type="family name" value="Glycosyltransferase Family 8"/>
</dbReference>
<dbReference type="GlyCosmos" id="Q12096">
    <property type="glycosylation" value="4 sites, No reported glycans"/>
</dbReference>
<dbReference type="GlyGen" id="Q12096">
    <property type="glycosylation" value="4 sites"/>
</dbReference>
<dbReference type="PaxDb" id="4932-YOR320C"/>
<dbReference type="PeptideAtlas" id="Q12096"/>
<dbReference type="EnsemblFungi" id="YOR320C_mRNA">
    <property type="protein sequence ID" value="YOR320C"/>
    <property type="gene ID" value="YOR320C"/>
</dbReference>
<dbReference type="GeneID" id="854498"/>
<dbReference type="KEGG" id="sce:YOR320C"/>
<dbReference type="AGR" id="SGD:S000005847"/>
<dbReference type="SGD" id="S000005847">
    <property type="gene designation" value="GNT1"/>
</dbReference>
<dbReference type="VEuPathDB" id="FungiDB:YOR320C"/>
<dbReference type="eggNOG" id="KOG1950">
    <property type="taxonomic scope" value="Eukaryota"/>
</dbReference>
<dbReference type="HOGENOM" id="CLU_034860_1_0_1"/>
<dbReference type="InParanoid" id="Q12096"/>
<dbReference type="OMA" id="ILPHRVY"/>
<dbReference type="OrthoDB" id="2014201at2759"/>
<dbReference type="BioCyc" id="YEAST:G3O-33800-MONOMER"/>
<dbReference type="BioGRID-ORCS" id="854498">
    <property type="hits" value="1 hit in 10 CRISPR screens"/>
</dbReference>
<dbReference type="PRO" id="PR:Q12096"/>
<dbReference type="Proteomes" id="UP000002311">
    <property type="component" value="Chromosome XV"/>
</dbReference>
<dbReference type="RNAct" id="Q12096">
    <property type="molecule type" value="protein"/>
</dbReference>
<dbReference type="GO" id="GO:0005797">
    <property type="term" value="C:Golgi medial cisterna"/>
    <property type="evidence" value="ECO:0000314"/>
    <property type="project" value="SGD"/>
</dbReference>
<dbReference type="GO" id="GO:0000139">
    <property type="term" value="C:Golgi membrane"/>
    <property type="evidence" value="ECO:0007669"/>
    <property type="project" value="UniProtKB-SubCell"/>
</dbReference>
<dbReference type="GO" id="GO:0005774">
    <property type="term" value="C:vacuolar membrane"/>
    <property type="evidence" value="ECO:0007669"/>
    <property type="project" value="UniProtKB-SubCell"/>
</dbReference>
<dbReference type="GO" id="GO:0008375">
    <property type="term" value="F:acetylglucosaminyltransferase activity"/>
    <property type="evidence" value="ECO:0000314"/>
    <property type="project" value="SGD"/>
</dbReference>
<dbReference type="GO" id="GO:0016757">
    <property type="term" value="F:glycosyltransferase activity"/>
    <property type="evidence" value="ECO:0000318"/>
    <property type="project" value="GO_Central"/>
</dbReference>
<dbReference type="GO" id="GO:0006487">
    <property type="term" value="P:protein N-linked glycosylation"/>
    <property type="evidence" value="ECO:0000315"/>
    <property type="project" value="SGD"/>
</dbReference>
<dbReference type="CDD" id="cd06914">
    <property type="entry name" value="GT8_GNT1"/>
    <property type="match status" value="1"/>
</dbReference>
<dbReference type="Gene3D" id="3.90.550.10">
    <property type="entry name" value="Spore Coat Polysaccharide Biosynthesis Protein SpsA, Chain A"/>
    <property type="match status" value="1"/>
</dbReference>
<dbReference type="InterPro" id="IPR050587">
    <property type="entry name" value="GNT1/Glycosyltrans_8"/>
</dbReference>
<dbReference type="InterPro" id="IPR029044">
    <property type="entry name" value="Nucleotide-diphossugar_trans"/>
</dbReference>
<dbReference type="PANTHER" id="PTHR11183">
    <property type="entry name" value="GLYCOGENIN SUBFAMILY MEMBER"/>
    <property type="match status" value="1"/>
</dbReference>
<dbReference type="SUPFAM" id="SSF53448">
    <property type="entry name" value="Nucleotide-diphospho-sugar transferases"/>
    <property type="match status" value="1"/>
</dbReference>
<name>GNT1_YEAST</name>
<organism>
    <name type="scientific">Saccharomyces cerevisiae (strain ATCC 204508 / S288c)</name>
    <name type="common">Baker's yeast</name>
    <dbReference type="NCBI Taxonomy" id="559292"/>
    <lineage>
        <taxon>Eukaryota</taxon>
        <taxon>Fungi</taxon>
        <taxon>Dikarya</taxon>
        <taxon>Ascomycota</taxon>
        <taxon>Saccharomycotina</taxon>
        <taxon>Saccharomycetes</taxon>
        <taxon>Saccharomycetales</taxon>
        <taxon>Saccharomycetaceae</taxon>
        <taxon>Saccharomyces</taxon>
    </lineage>
</organism>
<gene>
    <name type="primary">GNT1</name>
    <name type="ordered locus">YOR320C</name>
    <name type="ORF">O6145</name>
</gene>
<protein>
    <recommendedName>
        <fullName>Glucose N-acetyltransferase 1</fullName>
        <ecNumber>2.4.1.-</ecNumber>
    </recommendedName>
    <alternativeName>
        <fullName>N-acetylglucosaminyltransferase</fullName>
    </alternativeName>
</protein>
<proteinExistence type="evidence at protein level"/>
<accession>Q12096</accession>
<accession>D6W318</accession>